<name>TRMFO_STRPC</name>
<evidence type="ECO:0000255" key="1">
    <source>
        <dbReference type="HAMAP-Rule" id="MF_01037"/>
    </source>
</evidence>
<evidence type="ECO:0000305" key="2"/>
<accession>Q1JLM2</accession>
<organism>
    <name type="scientific">Streptococcus pyogenes serotype M12 (strain MGAS9429)</name>
    <dbReference type="NCBI Taxonomy" id="370551"/>
    <lineage>
        <taxon>Bacteria</taxon>
        <taxon>Bacillati</taxon>
        <taxon>Bacillota</taxon>
        <taxon>Bacilli</taxon>
        <taxon>Lactobacillales</taxon>
        <taxon>Streptococcaceae</taxon>
        <taxon>Streptococcus</taxon>
    </lineage>
</organism>
<protein>
    <recommendedName>
        <fullName evidence="1">Methylenetetrahydrofolate--tRNA-(uracil-5-)-methyltransferase TrmFO</fullName>
        <ecNumber evidence="1">2.1.1.74</ecNumber>
    </recommendedName>
    <alternativeName>
        <fullName evidence="1">Folate-dependent tRNA (uracil-5-)-methyltransferase</fullName>
    </alternativeName>
    <alternativeName>
        <fullName evidence="1">Folate-dependent tRNA(M-5-U54)-methyltransferase</fullName>
    </alternativeName>
</protein>
<feature type="chain" id="PRO_0000346400" description="Methylenetetrahydrofolate--tRNA-(uracil-5-)-methyltransferase TrmFO">
    <location>
        <begin position="1"/>
        <end position="448"/>
    </location>
</feature>
<feature type="binding site" evidence="1">
    <location>
        <begin position="13"/>
        <end position="18"/>
    </location>
    <ligand>
        <name>FAD</name>
        <dbReference type="ChEBI" id="CHEBI:57692"/>
    </ligand>
</feature>
<gene>
    <name evidence="1" type="primary">trmFO</name>
    <name type="ordered locus">MGAS9429_Spy1010</name>
</gene>
<proteinExistence type="inferred from homology"/>
<sequence length="448" mass="49483">MSQSTATYINVIGAGLAGSEAAYQIAKRGIPVKLYEMRGVKATPQHKTTNFAELVCSNSFRGDSLTNAVGLLKEEMRRLDSIIMRNGEANRVPAGGAMAVDREGYAESVTAELENHPLIDVIRDEITEIPDDAITVIATGPLTSDALAEKIHAVNGGDGFYFYDAAAPIIDKSTIDMSKVYLKSRYDKGEAAYLNCPMTKEEFMAFHEALTTAEEAPLNSFEKEKYFEGCMPIEVMAKRGIKTMLYGPMKPVGLEYPDDYTGPRDGEFKTPYAVVQLRQDNAAGSLYNIVGFQTHLKWGEQKRVFQMIPGLENAEFVRYGVMHRNSYMDSPNLLTETFQSRNNPNLFFAGQMTGVEGYVESAASGLVAGINAARLFKREEALVFPQTTAIGSLPHYVTHADSKHFQPMNVNFGIIKELEGPRIRDKKERYEAIASRALADLDTCLASL</sequence>
<dbReference type="EC" id="2.1.1.74" evidence="1"/>
<dbReference type="EMBL" id="CP000259">
    <property type="protein sequence ID" value="ABF32197.1"/>
    <property type="status" value="ALT_INIT"/>
    <property type="molecule type" value="Genomic_DNA"/>
</dbReference>
<dbReference type="RefSeq" id="WP_002989756.1">
    <property type="nucleotide sequence ID" value="NC_008021.1"/>
</dbReference>
<dbReference type="SMR" id="Q1JLM2"/>
<dbReference type="KEGG" id="spk:MGAS9429_Spy1010"/>
<dbReference type="HOGENOM" id="CLU_033057_1_0_9"/>
<dbReference type="Proteomes" id="UP000002433">
    <property type="component" value="Chromosome"/>
</dbReference>
<dbReference type="GO" id="GO:0005829">
    <property type="term" value="C:cytosol"/>
    <property type="evidence" value="ECO:0007669"/>
    <property type="project" value="TreeGrafter"/>
</dbReference>
<dbReference type="GO" id="GO:0050660">
    <property type="term" value="F:flavin adenine dinucleotide binding"/>
    <property type="evidence" value="ECO:0007669"/>
    <property type="project" value="UniProtKB-UniRule"/>
</dbReference>
<dbReference type="GO" id="GO:0047151">
    <property type="term" value="F:tRNA (uracil(54)-C5)-methyltransferase activity, 5,10-methylenetetrahydrofolate-dependent"/>
    <property type="evidence" value="ECO:0007669"/>
    <property type="project" value="UniProtKB-UniRule"/>
</dbReference>
<dbReference type="GO" id="GO:0030488">
    <property type="term" value="P:tRNA methylation"/>
    <property type="evidence" value="ECO:0007669"/>
    <property type="project" value="TreeGrafter"/>
</dbReference>
<dbReference type="GO" id="GO:0002098">
    <property type="term" value="P:tRNA wobble uridine modification"/>
    <property type="evidence" value="ECO:0007669"/>
    <property type="project" value="TreeGrafter"/>
</dbReference>
<dbReference type="FunFam" id="3.50.50.60:FF:000035">
    <property type="entry name" value="Methylenetetrahydrofolate--tRNA-(uracil-5-)-methyltransferase TrmFO"/>
    <property type="match status" value="1"/>
</dbReference>
<dbReference type="FunFam" id="3.50.50.60:FF:000040">
    <property type="entry name" value="Methylenetetrahydrofolate--tRNA-(uracil-5-)-methyltransferase TrmFO"/>
    <property type="match status" value="1"/>
</dbReference>
<dbReference type="Gene3D" id="3.50.50.60">
    <property type="entry name" value="FAD/NAD(P)-binding domain"/>
    <property type="match status" value="2"/>
</dbReference>
<dbReference type="HAMAP" id="MF_01037">
    <property type="entry name" value="TrmFO"/>
    <property type="match status" value="1"/>
</dbReference>
<dbReference type="InterPro" id="IPR036188">
    <property type="entry name" value="FAD/NAD-bd_sf"/>
</dbReference>
<dbReference type="InterPro" id="IPR002218">
    <property type="entry name" value="MnmG-rel"/>
</dbReference>
<dbReference type="InterPro" id="IPR020595">
    <property type="entry name" value="MnmG-rel_CS"/>
</dbReference>
<dbReference type="InterPro" id="IPR040131">
    <property type="entry name" value="MnmG_N"/>
</dbReference>
<dbReference type="InterPro" id="IPR004417">
    <property type="entry name" value="TrmFO"/>
</dbReference>
<dbReference type="NCBIfam" id="TIGR00137">
    <property type="entry name" value="gid_trmFO"/>
    <property type="match status" value="1"/>
</dbReference>
<dbReference type="NCBIfam" id="NF003739">
    <property type="entry name" value="PRK05335.1"/>
    <property type="match status" value="1"/>
</dbReference>
<dbReference type="PANTHER" id="PTHR11806">
    <property type="entry name" value="GLUCOSE INHIBITED DIVISION PROTEIN A"/>
    <property type="match status" value="1"/>
</dbReference>
<dbReference type="PANTHER" id="PTHR11806:SF2">
    <property type="entry name" value="METHYLENETETRAHYDROFOLATE--TRNA-(URACIL-5-)-METHYLTRANSFERASE TRMFO"/>
    <property type="match status" value="1"/>
</dbReference>
<dbReference type="Pfam" id="PF01134">
    <property type="entry name" value="GIDA"/>
    <property type="match status" value="1"/>
</dbReference>
<dbReference type="SUPFAM" id="SSF51905">
    <property type="entry name" value="FAD/NAD(P)-binding domain"/>
    <property type="match status" value="1"/>
</dbReference>
<dbReference type="PROSITE" id="PS01281">
    <property type="entry name" value="GIDA_2"/>
    <property type="match status" value="1"/>
</dbReference>
<reference key="1">
    <citation type="journal article" date="2006" name="Proc. Natl. Acad. Sci. U.S.A.">
        <title>Molecular genetic anatomy of inter- and intraserotype variation in the human bacterial pathogen group A Streptococcus.</title>
        <authorList>
            <person name="Beres S.B."/>
            <person name="Richter E.W."/>
            <person name="Nagiec M.J."/>
            <person name="Sumby P."/>
            <person name="Porcella S.F."/>
            <person name="DeLeo F.R."/>
            <person name="Musser J.M."/>
        </authorList>
    </citation>
    <scope>NUCLEOTIDE SEQUENCE [LARGE SCALE GENOMIC DNA]</scope>
    <source>
        <strain>MGAS9429</strain>
    </source>
</reference>
<comment type="function">
    <text evidence="1">Catalyzes the folate-dependent formation of 5-methyl-uridine at position 54 (M-5-U54) in all tRNAs.</text>
</comment>
<comment type="catalytic activity">
    <reaction evidence="1">
        <text>uridine(54) in tRNA + (6R)-5,10-methylene-5,6,7,8-tetrahydrofolate + NADH + H(+) = 5-methyluridine(54) in tRNA + (6S)-5,6,7,8-tetrahydrofolate + NAD(+)</text>
        <dbReference type="Rhea" id="RHEA:16873"/>
        <dbReference type="Rhea" id="RHEA-COMP:10167"/>
        <dbReference type="Rhea" id="RHEA-COMP:10193"/>
        <dbReference type="ChEBI" id="CHEBI:15378"/>
        <dbReference type="ChEBI" id="CHEBI:15636"/>
        <dbReference type="ChEBI" id="CHEBI:57453"/>
        <dbReference type="ChEBI" id="CHEBI:57540"/>
        <dbReference type="ChEBI" id="CHEBI:57945"/>
        <dbReference type="ChEBI" id="CHEBI:65315"/>
        <dbReference type="ChEBI" id="CHEBI:74447"/>
        <dbReference type="EC" id="2.1.1.74"/>
    </reaction>
</comment>
<comment type="catalytic activity">
    <reaction evidence="1">
        <text>uridine(54) in tRNA + (6R)-5,10-methylene-5,6,7,8-tetrahydrofolate + NADPH + H(+) = 5-methyluridine(54) in tRNA + (6S)-5,6,7,8-tetrahydrofolate + NADP(+)</text>
        <dbReference type="Rhea" id="RHEA:62372"/>
        <dbReference type="Rhea" id="RHEA-COMP:10167"/>
        <dbReference type="Rhea" id="RHEA-COMP:10193"/>
        <dbReference type="ChEBI" id="CHEBI:15378"/>
        <dbReference type="ChEBI" id="CHEBI:15636"/>
        <dbReference type="ChEBI" id="CHEBI:57453"/>
        <dbReference type="ChEBI" id="CHEBI:57783"/>
        <dbReference type="ChEBI" id="CHEBI:58349"/>
        <dbReference type="ChEBI" id="CHEBI:65315"/>
        <dbReference type="ChEBI" id="CHEBI:74447"/>
        <dbReference type="EC" id="2.1.1.74"/>
    </reaction>
</comment>
<comment type="cofactor">
    <cofactor evidence="1">
        <name>FAD</name>
        <dbReference type="ChEBI" id="CHEBI:57692"/>
    </cofactor>
</comment>
<comment type="subcellular location">
    <subcellularLocation>
        <location evidence="1">Cytoplasm</location>
    </subcellularLocation>
</comment>
<comment type="similarity">
    <text evidence="1">Belongs to the MnmG family. TrmFO subfamily.</text>
</comment>
<comment type="sequence caution" evidence="2">
    <conflict type="erroneous initiation">
        <sequence resource="EMBL-CDS" id="ABF32197"/>
    </conflict>
</comment>
<keyword id="KW-0963">Cytoplasm</keyword>
<keyword id="KW-0274">FAD</keyword>
<keyword id="KW-0285">Flavoprotein</keyword>
<keyword id="KW-0489">Methyltransferase</keyword>
<keyword id="KW-0520">NAD</keyword>
<keyword id="KW-0521">NADP</keyword>
<keyword id="KW-0808">Transferase</keyword>
<keyword id="KW-0819">tRNA processing</keyword>